<comment type="similarity">
    <text evidence="1">Belongs to the bacterial ribosomal protein bL28 family.</text>
</comment>
<sequence length="78" mass="9119">MSRVCQLTGKKANNAYAISHSHRRTKRLQNVNLQEKRIWWPEGNRFVKLRLSTKAIKTLQKKGLSAYARELGIDLKRL</sequence>
<name>RL28_SYNE7</name>
<keyword id="KW-1185">Reference proteome</keyword>
<keyword id="KW-0687">Ribonucleoprotein</keyword>
<keyword id="KW-0689">Ribosomal protein</keyword>
<organism>
    <name type="scientific">Synechococcus elongatus (strain ATCC 33912 / PCC 7942 / FACHB-805)</name>
    <name type="common">Anacystis nidulans R2</name>
    <dbReference type="NCBI Taxonomy" id="1140"/>
    <lineage>
        <taxon>Bacteria</taxon>
        <taxon>Bacillati</taxon>
        <taxon>Cyanobacteriota</taxon>
        <taxon>Cyanophyceae</taxon>
        <taxon>Synechococcales</taxon>
        <taxon>Synechococcaceae</taxon>
        <taxon>Synechococcus</taxon>
    </lineage>
</organism>
<accession>Q31S95</accession>
<reference key="1">
    <citation type="submission" date="2005-08" db="EMBL/GenBank/DDBJ databases">
        <title>Complete sequence of chromosome 1 of Synechococcus elongatus PCC 7942.</title>
        <authorList>
            <consortium name="US DOE Joint Genome Institute"/>
            <person name="Copeland A."/>
            <person name="Lucas S."/>
            <person name="Lapidus A."/>
            <person name="Barry K."/>
            <person name="Detter J.C."/>
            <person name="Glavina T."/>
            <person name="Hammon N."/>
            <person name="Israni S."/>
            <person name="Pitluck S."/>
            <person name="Schmutz J."/>
            <person name="Larimer F."/>
            <person name="Land M."/>
            <person name="Kyrpides N."/>
            <person name="Lykidis A."/>
            <person name="Golden S."/>
            <person name="Richardson P."/>
        </authorList>
    </citation>
    <scope>NUCLEOTIDE SEQUENCE [LARGE SCALE GENOMIC DNA]</scope>
    <source>
        <strain>ATCC 33912 / PCC 7942 / FACHB-805</strain>
    </source>
</reference>
<proteinExistence type="inferred from homology"/>
<gene>
    <name evidence="1" type="primary">rpmB</name>
    <name evidence="1" type="synonym">rpl28</name>
    <name type="ordered locus">Synpcc7942_0042</name>
</gene>
<dbReference type="EMBL" id="CP000100">
    <property type="protein sequence ID" value="ABB56074.1"/>
    <property type="molecule type" value="Genomic_DNA"/>
</dbReference>
<dbReference type="RefSeq" id="WP_011243767.1">
    <property type="nucleotide sequence ID" value="NZ_JACJTX010000002.1"/>
</dbReference>
<dbReference type="SMR" id="Q31S95"/>
<dbReference type="STRING" id="1140.Synpcc7942_0042"/>
<dbReference type="PaxDb" id="1140-Synpcc7942_0042"/>
<dbReference type="GeneID" id="72428851"/>
<dbReference type="KEGG" id="syf:Synpcc7942_0042"/>
<dbReference type="eggNOG" id="COG0227">
    <property type="taxonomic scope" value="Bacteria"/>
</dbReference>
<dbReference type="HOGENOM" id="CLU_064548_3_0_3"/>
<dbReference type="OrthoDB" id="9805609at2"/>
<dbReference type="BioCyc" id="SYNEL:SYNPCC7942_0042-MONOMER"/>
<dbReference type="Proteomes" id="UP000889800">
    <property type="component" value="Chromosome"/>
</dbReference>
<dbReference type="GO" id="GO:1990904">
    <property type="term" value="C:ribonucleoprotein complex"/>
    <property type="evidence" value="ECO:0007669"/>
    <property type="project" value="UniProtKB-KW"/>
</dbReference>
<dbReference type="GO" id="GO:0005840">
    <property type="term" value="C:ribosome"/>
    <property type="evidence" value="ECO:0007669"/>
    <property type="project" value="UniProtKB-KW"/>
</dbReference>
<dbReference type="GO" id="GO:0003735">
    <property type="term" value="F:structural constituent of ribosome"/>
    <property type="evidence" value="ECO:0007669"/>
    <property type="project" value="InterPro"/>
</dbReference>
<dbReference type="GO" id="GO:0006412">
    <property type="term" value="P:translation"/>
    <property type="evidence" value="ECO:0007669"/>
    <property type="project" value="UniProtKB-UniRule"/>
</dbReference>
<dbReference type="Gene3D" id="2.30.170.40">
    <property type="entry name" value="Ribosomal protein L28/L24"/>
    <property type="match status" value="1"/>
</dbReference>
<dbReference type="HAMAP" id="MF_00373">
    <property type="entry name" value="Ribosomal_bL28"/>
    <property type="match status" value="1"/>
</dbReference>
<dbReference type="InterPro" id="IPR026569">
    <property type="entry name" value="Ribosomal_bL28"/>
</dbReference>
<dbReference type="InterPro" id="IPR034704">
    <property type="entry name" value="Ribosomal_bL28/bL31-like_sf"/>
</dbReference>
<dbReference type="InterPro" id="IPR001383">
    <property type="entry name" value="Ribosomal_bL28_bact-type"/>
</dbReference>
<dbReference type="InterPro" id="IPR037147">
    <property type="entry name" value="Ribosomal_bL28_sf"/>
</dbReference>
<dbReference type="NCBIfam" id="TIGR00009">
    <property type="entry name" value="L28"/>
    <property type="match status" value="1"/>
</dbReference>
<dbReference type="PANTHER" id="PTHR13528">
    <property type="entry name" value="39S RIBOSOMAL PROTEIN L28, MITOCHONDRIAL"/>
    <property type="match status" value="1"/>
</dbReference>
<dbReference type="PANTHER" id="PTHR13528:SF2">
    <property type="entry name" value="LARGE RIBOSOMAL SUBUNIT PROTEIN BL28M"/>
    <property type="match status" value="1"/>
</dbReference>
<dbReference type="Pfam" id="PF00830">
    <property type="entry name" value="Ribosomal_L28"/>
    <property type="match status" value="1"/>
</dbReference>
<dbReference type="SUPFAM" id="SSF143800">
    <property type="entry name" value="L28p-like"/>
    <property type="match status" value="1"/>
</dbReference>
<evidence type="ECO:0000255" key="1">
    <source>
        <dbReference type="HAMAP-Rule" id="MF_00373"/>
    </source>
</evidence>
<evidence type="ECO:0000305" key="2"/>
<protein>
    <recommendedName>
        <fullName evidence="1">Large ribosomal subunit protein bL28</fullName>
    </recommendedName>
    <alternativeName>
        <fullName evidence="2">50S ribosomal protein L28</fullName>
    </alternativeName>
</protein>
<feature type="chain" id="PRO_1000007385" description="Large ribosomal subunit protein bL28">
    <location>
        <begin position="1"/>
        <end position="78"/>
    </location>
</feature>